<name>SIM12_HORSE</name>
<feature type="chain" id="PRO_0000414319" description="Small integral membrane protein 12">
    <location>
        <begin position="1"/>
        <end position="92"/>
    </location>
</feature>
<feature type="transmembrane region" description="Helical" evidence="1">
    <location>
        <begin position="12"/>
        <end position="34"/>
    </location>
</feature>
<accession>F6USH3</accession>
<dbReference type="EMBL" id="AAWR02028136">
    <property type="status" value="NOT_ANNOTATED_CDS"/>
    <property type="molecule type" value="Genomic_DNA"/>
</dbReference>
<dbReference type="RefSeq" id="XP_005607276.1">
    <property type="nucleotide sequence ID" value="XM_005607219.4"/>
</dbReference>
<dbReference type="RefSeq" id="XP_014592649.1">
    <property type="nucleotide sequence ID" value="XM_014737163.3"/>
</dbReference>
<dbReference type="SMR" id="F6USH3"/>
<dbReference type="FunCoup" id="F6USH3">
    <property type="interactions" value="1149"/>
</dbReference>
<dbReference type="STRING" id="9796.ENSECAP00000020916"/>
<dbReference type="PaxDb" id="9796-ENSECAP00000020916"/>
<dbReference type="Ensembl" id="ENSECAT00000082064.1">
    <property type="protein sequence ID" value="ENSECAP00000082807.1"/>
    <property type="gene ID" value="ENSECAG00000023494.3"/>
</dbReference>
<dbReference type="Ensembl" id="ENSECAT00000089900.1">
    <property type="protein sequence ID" value="ENSECAP00000086547.1"/>
    <property type="gene ID" value="ENSECAG00000023494.3"/>
</dbReference>
<dbReference type="Ensembl" id="ENSECAT00000145809.1">
    <property type="protein sequence ID" value="ENSECAP00000085427.1"/>
    <property type="gene ID" value="ENSECAG00000023494.3"/>
</dbReference>
<dbReference type="GeneID" id="100069744"/>
<dbReference type="CTD" id="113444"/>
<dbReference type="VGNC" id="VGNC:23342">
    <property type="gene designation" value="SMIM12"/>
</dbReference>
<dbReference type="GeneTree" id="ENSGT00390000009435"/>
<dbReference type="HOGENOM" id="CLU_160787_0_0_1"/>
<dbReference type="InParanoid" id="F6USH3"/>
<dbReference type="OrthoDB" id="10052506at2759"/>
<dbReference type="TreeFam" id="TF328614"/>
<dbReference type="Proteomes" id="UP000002281">
    <property type="component" value="Chromosome 2"/>
</dbReference>
<dbReference type="GO" id="GO:0016020">
    <property type="term" value="C:membrane"/>
    <property type="evidence" value="ECO:0007669"/>
    <property type="project" value="UniProtKB-SubCell"/>
</dbReference>
<dbReference type="InterPro" id="IPR031933">
    <property type="entry name" value="UPF0767"/>
</dbReference>
<dbReference type="PANTHER" id="PTHR28599">
    <property type="entry name" value="SMALL INTEGRAL MEMBRANE PROTEIN 12"/>
    <property type="match status" value="1"/>
</dbReference>
<dbReference type="PANTHER" id="PTHR28599:SF1">
    <property type="entry name" value="SMALL INTEGRAL MEMBRANE PROTEIN 12"/>
    <property type="match status" value="1"/>
</dbReference>
<dbReference type="Pfam" id="PF15990">
    <property type="entry name" value="UPF0767"/>
    <property type="match status" value="1"/>
</dbReference>
<organism>
    <name type="scientific">Equus caballus</name>
    <name type="common">Horse</name>
    <dbReference type="NCBI Taxonomy" id="9796"/>
    <lineage>
        <taxon>Eukaryota</taxon>
        <taxon>Metazoa</taxon>
        <taxon>Chordata</taxon>
        <taxon>Craniata</taxon>
        <taxon>Vertebrata</taxon>
        <taxon>Euteleostomi</taxon>
        <taxon>Mammalia</taxon>
        <taxon>Eutheria</taxon>
        <taxon>Laurasiatheria</taxon>
        <taxon>Perissodactyla</taxon>
        <taxon>Equidae</taxon>
        <taxon>Equus</taxon>
    </lineage>
</organism>
<reference key="1">
    <citation type="journal article" date="2009" name="Science">
        <title>Genome sequence, comparative analysis, and population genetics of the domestic horse.</title>
        <authorList>
            <person name="Wade C.M."/>
            <person name="Giulotto E."/>
            <person name="Sigurdsson S."/>
            <person name="Zoli M."/>
            <person name="Gnerre S."/>
            <person name="Imsland F."/>
            <person name="Lear T.L."/>
            <person name="Adelson D.L."/>
            <person name="Bailey E."/>
            <person name="Bellone R.R."/>
            <person name="Bloecker H."/>
            <person name="Distl O."/>
            <person name="Edgar R.C."/>
            <person name="Garber M."/>
            <person name="Leeb T."/>
            <person name="Mauceli E."/>
            <person name="MacLeod J.N."/>
            <person name="Penedo M.C.T."/>
            <person name="Raison J.M."/>
            <person name="Sharpe T."/>
            <person name="Vogel J."/>
            <person name="Andersson L."/>
            <person name="Antczak D.F."/>
            <person name="Biagi T."/>
            <person name="Binns M.M."/>
            <person name="Chowdhary B.P."/>
            <person name="Coleman S.J."/>
            <person name="Della Valle G."/>
            <person name="Fryc S."/>
            <person name="Guerin G."/>
            <person name="Hasegawa T."/>
            <person name="Hill E.W."/>
            <person name="Jurka J."/>
            <person name="Kiialainen A."/>
            <person name="Lindgren G."/>
            <person name="Liu J."/>
            <person name="Magnani E."/>
            <person name="Mickelson J.R."/>
            <person name="Murray J."/>
            <person name="Nergadze S.G."/>
            <person name="Onofrio R."/>
            <person name="Pedroni S."/>
            <person name="Piras M.F."/>
            <person name="Raudsepp T."/>
            <person name="Rocchi M."/>
            <person name="Roeed K.H."/>
            <person name="Ryder O.A."/>
            <person name="Searle S."/>
            <person name="Skow L."/>
            <person name="Swinburne J.E."/>
            <person name="Syvaenen A.C."/>
            <person name="Tozaki T."/>
            <person name="Valberg S.J."/>
            <person name="Vaudin M."/>
            <person name="White J.R."/>
            <person name="Zody M.C."/>
            <person name="Lander E.S."/>
            <person name="Lindblad-Toh K."/>
        </authorList>
    </citation>
    <scope>NUCLEOTIDE SEQUENCE [LARGE SCALE GENOMIC DNA]</scope>
    <source>
        <strain>Thoroughbred</strain>
    </source>
</reference>
<evidence type="ECO:0000255" key="1"/>
<evidence type="ECO:0000305" key="2"/>
<protein>
    <recommendedName>
        <fullName>Small integral membrane protein 12</fullName>
    </recommendedName>
</protein>
<proteinExistence type="inferred from homology"/>
<sequence length="92" mass="10779">MWPVLWTVVRTYAPYVTFPVAFVVGAVGYHLEWFIRGKEPQPVEEEKSISERREDRKLDELLGKDHTQVVSLKDKLEFAPKAVLNRNRPEKN</sequence>
<keyword id="KW-0472">Membrane</keyword>
<keyword id="KW-1185">Reference proteome</keyword>
<keyword id="KW-0812">Transmembrane</keyword>
<keyword id="KW-1133">Transmembrane helix</keyword>
<gene>
    <name type="primary">SMIM12</name>
</gene>
<comment type="subcellular location">
    <subcellularLocation>
        <location evidence="2">Membrane</location>
        <topology evidence="2">Single-pass membrane protein</topology>
    </subcellularLocation>
</comment>
<comment type="similarity">
    <text evidence="2">Belongs to the SMIM12 family.</text>
</comment>